<accession>Q6P7W5</accession>
<accession>Q3UYG6</accession>
<keyword id="KW-0456">Lyase</keyword>
<keyword id="KW-0507">mRNA processing</keyword>
<keyword id="KW-0539">Nucleus</keyword>
<keyword id="KW-0597">Phosphoprotein</keyword>
<keyword id="KW-1185">Reference proteome</keyword>
<keyword id="KW-0819">tRNA processing</keyword>
<gene>
    <name type="primary">Tsen2</name>
    <name type="synonym">Sen2</name>
</gene>
<reference key="1">
    <citation type="journal article" date="2005" name="Science">
        <title>The transcriptional landscape of the mammalian genome.</title>
        <authorList>
            <person name="Carninci P."/>
            <person name="Kasukawa T."/>
            <person name="Katayama S."/>
            <person name="Gough J."/>
            <person name="Frith M.C."/>
            <person name="Maeda N."/>
            <person name="Oyama R."/>
            <person name="Ravasi T."/>
            <person name="Lenhard B."/>
            <person name="Wells C."/>
            <person name="Kodzius R."/>
            <person name="Shimokawa K."/>
            <person name="Bajic V.B."/>
            <person name="Brenner S.E."/>
            <person name="Batalov S."/>
            <person name="Forrest A.R."/>
            <person name="Zavolan M."/>
            <person name="Davis M.J."/>
            <person name="Wilming L.G."/>
            <person name="Aidinis V."/>
            <person name="Allen J.E."/>
            <person name="Ambesi-Impiombato A."/>
            <person name="Apweiler R."/>
            <person name="Aturaliya R.N."/>
            <person name="Bailey T.L."/>
            <person name="Bansal M."/>
            <person name="Baxter L."/>
            <person name="Beisel K.W."/>
            <person name="Bersano T."/>
            <person name="Bono H."/>
            <person name="Chalk A.M."/>
            <person name="Chiu K.P."/>
            <person name="Choudhary V."/>
            <person name="Christoffels A."/>
            <person name="Clutterbuck D.R."/>
            <person name="Crowe M.L."/>
            <person name="Dalla E."/>
            <person name="Dalrymple B.P."/>
            <person name="de Bono B."/>
            <person name="Della Gatta G."/>
            <person name="di Bernardo D."/>
            <person name="Down T."/>
            <person name="Engstrom P."/>
            <person name="Fagiolini M."/>
            <person name="Faulkner G."/>
            <person name="Fletcher C.F."/>
            <person name="Fukushima T."/>
            <person name="Furuno M."/>
            <person name="Futaki S."/>
            <person name="Gariboldi M."/>
            <person name="Georgii-Hemming P."/>
            <person name="Gingeras T.R."/>
            <person name="Gojobori T."/>
            <person name="Green R.E."/>
            <person name="Gustincich S."/>
            <person name="Harbers M."/>
            <person name="Hayashi Y."/>
            <person name="Hensch T.K."/>
            <person name="Hirokawa N."/>
            <person name="Hill D."/>
            <person name="Huminiecki L."/>
            <person name="Iacono M."/>
            <person name="Ikeo K."/>
            <person name="Iwama A."/>
            <person name="Ishikawa T."/>
            <person name="Jakt M."/>
            <person name="Kanapin A."/>
            <person name="Katoh M."/>
            <person name="Kawasawa Y."/>
            <person name="Kelso J."/>
            <person name="Kitamura H."/>
            <person name="Kitano H."/>
            <person name="Kollias G."/>
            <person name="Krishnan S.P."/>
            <person name="Kruger A."/>
            <person name="Kummerfeld S.K."/>
            <person name="Kurochkin I.V."/>
            <person name="Lareau L.F."/>
            <person name="Lazarevic D."/>
            <person name="Lipovich L."/>
            <person name="Liu J."/>
            <person name="Liuni S."/>
            <person name="McWilliam S."/>
            <person name="Madan Babu M."/>
            <person name="Madera M."/>
            <person name="Marchionni L."/>
            <person name="Matsuda H."/>
            <person name="Matsuzawa S."/>
            <person name="Miki H."/>
            <person name="Mignone F."/>
            <person name="Miyake S."/>
            <person name="Morris K."/>
            <person name="Mottagui-Tabar S."/>
            <person name="Mulder N."/>
            <person name="Nakano N."/>
            <person name="Nakauchi H."/>
            <person name="Ng P."/>
            <person name="Nilsson R."/>
            <person name="Nishiguchi S."/>
            <person name="Nishikawa S."/>
            <person name="Nori F."/>
            <person name="Ohara O."/>
            <person name="Okazaki Y."/>
            <person name="Orlando V."/>
            <person name="Pang K.C."/>
            <person name="Pavan W.J."/>
            <person name="Pavesi G."/>
            <person name="Pesole G."/>
            <person name="Petrovsky N."/>
            <person name="Piazza S."/>
            <person name="Reed J."/>
            <person name="Reid J.F."/>
            <person name="Ring B.Z."/>
            <person name="Ringwald M."/>
            <person name="Rost B."/>
            <person name="Ruan Y."/>
            <person name="Salzberg S.L."/>
            <person name="Sandelin A."/>
            <person name="Schneider C."/>
            <person name="Schoenbach C."/>
            <person name="Sekiguchi K."/>
            <person name="Semple C.A."/>
            <person name="Seno S."/>
            <person name="Sessa L."/>
            <person name="Sheng Y."/>
            <person name="Shibata Y."/>
            <person name="Shimada H."/>
            <person name="Shimada K."/>
            <person name="Silva D."/>
            <person name="Sinclair B."/>
            <person name="Sperling S."/>
            <person name="Stupka E."/>
            <person name="Sugiura K."/>
            <person name="Sultana R."/>
            <person name="Takenaka Y."/>
            <person name="Taki K."/>
            <person name="Tammoja K."/>
            <person name="Tan S.L."/>
            <person name="Tang S."/>
            <person name="Taylor M.S."/>
            <person name="Tegner J."/>
            <person name="Teichmann S.A."/>
            <person name="Ueda H.R."/>
            <person name="van Nimwegen E."/>
            <person name="Verardo R."/>
            <person name="Wei C.L."/>
            <person name="Yagi K."/>
            <person name="Yamanishi H."/>
            <person name="Zabarovsky E."/>
            <person name="Zhu S."/>
            <person name="Zimmer A."/>
            <person name="Hide W."/>
            <person name="Bult C."/>
            <person name="Grimmond S.M."/>
            <person name="Teasdale R.D."/>
            <person name="Liu E.T."/>
            <person name="Brusic V."/>
            <person name="Quackenbush J."/>
            <person name="Wahlestedt C."/>
            <person name="Mattick J.S."/>
            <person name="Hume D.A."/>
            <person name="Kai C."/>
            <person name="Sasaki D."/>
            <person name="Tomaru Y."/>
            <person name="Fukuda S."/>
            <person name="Kanamori-Katayama M."/>
            <person name="Suzuki M."/>
            <person name="Aoki J."/>
            <person name="Arakawa T."/>
            <person name="Iida J."/>
            <person name="Imamura K."/>
            <person name="Itoh M."/>
            <person name="Kato T."/>
            <person name="Kawaji H."/>
            <person name="Kawagashira N."/>
            <person name="Kawashima T."/>
            <person name="Kojima M."/>
            <person name="Kondo S."/>
            <person name="Konno H."/>
            <person name="Nakano K."/>
            <person name="Ninomiya N."/>
            <person name="Nishio T."/>
            <person name="Okada M."/>
            <person name="Plessy C."/>
            <person name="Shibata K."/>
            <person name="Shiraki T."/>
            <person name="Suzuki S."/>
            <person name="Tagami M."/>
            <person name="Waki K."/>
            <person name="Watahiki A."/>
            <person name="Okamura-Oho Y."/>
            <person name="Suzuki H."/>
            <person name="Kawai J."/>
            <person name="Hayashizaki Y."/>
        </authorList>
    </citation>
    <scope>NUCLEOTIDE SEQUENCE [LARGE SCALE MRNA]</scope>
    <source>
        <strain>C57BL/6J</strain>
        <tissue>Medulla oblongata</tissue>
    </source>
</reference>
<reference key="2">
    <citation type="journal article" date="2004" name="Genome Res.">
        <title>The status, quality, and expansion of the NIH full-length cDNA project: the Mammalian Gene Collection (MGC).</title>
        <authorList>
            <consortium name="The MGC Project Team"/>
        </authorList>
    </citation>
    <scope>NUCLEOTIDE SEQUENCE [LARGE SCALE MRNA]</scope>
    <source>
        <strain>C57BL/6J</strain>
        <tissue>Brain</tissue>
    </source>
</reference>
<reference key="3">
    <citation type="journal article" date="2004" name="Mol. Cell. Proteomics">
        <title>Phosphoproteomic analysis of the developing mouse brain.</title>
        <authorList>
            <person name="Ballif B.A."/>
            <person name="Villen J."/>
            <person name="Beausoleil S.A."/>
            <person name="Schwartz D."/>
            <person name="Gygi S.P."/>
        </authorList>
    </citation>
    <scope>PHOSPHORYLATION [LARGE SCALE ANALYSIS] AT SER-403; SER-406 AND SER-410</scope>
    <scope>IDENTIFICATION BY MASS SPECTROMETRY [LARGE SCALE ANALYSIS]</scope>
    <source>
        <tissue>Embryonic brain</tissue>
    </source>
</reference>
<proteinExistence type="evidence at protein level"/>
<feature type="chain" id="PRO_0000109453" description="tRNA-splicing endonuclease subunit Sen2">
    <location>
        <begin position="1"/>
        <end position="460"/>
    </location>
</feature>
<feature type="region of interest" description="Disordered" evidence="2">
    <location>
        <begin position="143"/>
        <end position="215"/>
    </location>
</feature>
<feature type="compositionally biased region" description="Basic and acidic residues" evidence="2">
    <location>
        <begin position="159"/>
        <end position="170"/>
    </location>
</feature>
<feature type="active site" evidence="1">
    <location>
        <position position="364"/>
    </location>
</feature>
<feature type="active site" evidence="1">
    <location>
        <position position="372"/>
    </location>
</feature>
<feature type="active site" evidence="1">
    <location>
        <position position="411"/>
    </location>
</feature>
<feature type="modified residue" description="Phosphoserine" evidence="4">
    <location>
        <position position="403"/>
    </location>
</feature>
<feature type="modified residue" description="Phosphoserine" evidence="4">
    <location>
        <position position="406"/>
    </location>
</feature>
<feature type="modified residue" description="Phosphoserine" evidence="4">
    <location>
        <position position="410"/>
    </location>
</feature>
<organism>
    <name type="scientific">Mus musculus</name>
    <name type="common">Mouse</name>
    <dbReference type="NCBI Taxonomy" id="10090"/>
    <lineage>
        <taxon>Eukaryota</taxon>
        <taxon>Metazoa</taxon>
        <taxon>Chordata</taxon>
        <taxon>Craniata</taxon>
        <taxon>Vertebrata</taxon>
        <taxon>Euteleostomi</taxon>
        <taxon>Mammalia</taxon>
        <taxon>Eutheria</taxon>
        <taxon>Euarchontoglires</taxon>
        <taxon>Glires</taxon>
        <taxon>Rodentia</taxon>
        <taxon>Myomorpha</taxon>
        <taxon>Muroidea</taxon>
        <taxon>Muridae</taxon>
        <taxon>Murinae</taxon>
        <taxon>Mus</taxon>
        <taxon>Mus</taxon>
    </lineage>
</organism>
<evidence type="ECO:0000250" key="1"/>
<evidence type="ECO:0000256" key="2">
    <source>
        <dbReference type="SAM" id="MobiDB-lite"/>
    </source>
</evidence>
<evidence type="ECO:0000305" key="3"/>
<evidence type="ECO:0007744" key="4">
    <source>
    </source>
</evidence>
<dbReference type="EC" id="4.6.1.16"/>
<dbReference type="EMBL" id="AK134697">
    <property type="protein sequence ID" value="BAE22246.1"/>
    <property type="molecule type" value="mRNA"/>
</dbReference>
<dbReference type="EMBL" id="BC061473">
    <property type="protein sequence ID" value="AAH61473.1"/>
    <property type="molecule type" value="mRNA"/>
</dbReference>
<dbReference type="CCDS" id="CCDS20440.1"/>
<dbReference type="RefSeq" id="NP_950198.1">
    <property type="nucleotide sequence ID" value="NM_199033.3"/>
</dbReference>
<dbReference type="SMR" id="Q6P7W5"/>
<dbReference type="BioGRID" id="238099">
    <property type="interactions" value="1"/>
</dbReference>
<dbReference type="FunCoup" id="Q6P7W5">
    <property type="interactions" value="2260"/>
</dbReference>
<dbReference type="STRING" id="10090.ENSMUSP00000038211"/>
<dbReference type="iPTMnet" id="Q6P7W5"/>
<dbReference type="PhosphoSitePlus" id="Q6P7W5"/>
<dbReference type="PaxDb" id="10090-ENSMUSP00000038211"/>
<dbReference type="PeptideAtlas" id="Q6P7W5"/>
<dbReference type="ProteomicsDB" id="256955"/>
<dbReference type="Pumba" id="Q6P7W5"/>
<dbReference type="Antibodypedia" id="26210">
    <property type="antibodies" value="194 antibodies from 25 providers"/>
</dbReference>
<dbReference type="DNASU" id="381802"/>
<dbReference type="Ensembl" id="ENSMUST00000040234.9">
    <property type="protein sequence ID" value="ENSMUSP00000038211.8"/>
    <property type="gene ID" value="ENSMUSG00000042389.14"/>
</dbReference>
<dbReference type="GeneID" id="381802"/>
<dbReference type="KEGG" id="mmu:381802"/>
<dbReference type="UCSC" id="uc009diu.1">
    <property type="organism name" value="mouse"/>
</dbReference>
<dbReference type="AGR" id="MGI:2141599"/>
<dbReference type="CTD" id="80746"/>
<dbReference type="MGI" id="MGI:2141599">
    <property type="gene designation" value="Tsen2"/>
</dbReference>
<dbReference type="VEuPathDB" id="HostDB:ENSMUSG00000042389"/>
<dbReference type="eggNOG" id="KOG4685">
    <property type="taxonomic scope" value="Eukaryota"/>
</dbReference>
<dbReference type="GeneTree" id="ENSGT00390000013266"/>
<dbReference type="HOGENOM" id="CLU_046429_1_0_1"/>
<dbReference type="InParanoid" id="Q6P7W5"/>
<dbReference type="OMA" id="LWRRWNP"/>
<dbReference type="OrthoDB" id="10249562at2759"/>
<dbReference type="PhylomeDB" id="Q6P7W5"/>
<dbReference type="TreeFam" id="TF314679"/>
<dbReference type="BioGRID-ORCS" id="381802">
    <property type="hits" value="21 hits in 80 CRISPR screens"/>
</dbReference>
<dbReference type="ChiTaRS" id="Tsen2">
    <property type="organism name" value="mouse"/>
</dbReference>
<dbReference type="PRO" id="PR:Q6P7W5"/>
<dbReference type="Proteomes" id="UP000000589">
    <property type="component" value="Chromosome 6"/>
</dbReference>
<dbReference type="RNAct" id="Q6P7W5">
    <property type="molecule type" value="protein"/>
</dbReference>
<dbReference type="Bgee" id="ENSMUSG00000042389">
    <property type="expression patterns" value="Expressed in dorsal pancreas and 230 other cell types or tissues"/>
</dbReference>
<dbReference type="ExpressionAtlas" id="Q6P7W5">
    <property type="expression patterns" value="baseline and differential"/>
</dbReference>
<dbReference type="GO" id="GO:0005813">
    <property type="term" value="C:centrosome"/>
    <property type="evidence" value="ECO:0007669"/>
    <property type="project" value="Ensembl"/>
</dbReference>
<dbReference type="GO" id="GO:0005829">
    <property type="term" value="C:cytosol"/>
    <property type="evidence" value="ECO:0007669"/>
    <property type="project" value="Ensembl"/>
</dbReference>
<dbReference type="GO" id="GO:0005730">
    <property type="term" value="C:nucleolus"/>
    <property type="evidence" value="ECO:0007669"/>
    <property type="project" value="UniProtKB-SubCell"/>
</dbReference>
<dbReference type="GO" id="GO:0005654">
    <property type="term" value="C:nucleoplasm"/>
    <property type="evidence" value="ECO:0007669"/>
    <property type="project" value="Ensembl"/>
</dbReference>
<dbReference type="GO" id="GO:0000214">
    <property type="term" value="C:tRNA-intron endonuclease complex"/>
    <property type="evidence" value="ECO:0007669"/>
    <property type="project" value="InterPro"/>
</dbReference>
<dbReference type="GO" id="GO:0016829">
    <property type="term" value="F:lyase activity"/>
    <property type="evidence" value="ECO:0007669"/>
    <property type="project" value="UniProtKB-KW"/>
</dbReference>
<dbReference type="GO" id="GO:0003676">
    <property type="term" value="F:nucleic acid binding"/>
    <property type="evidence" value="ECO:0007669"/>
    <property type="project" value="InterPro"/>
</dbReference>
<dbReference type="GO" id="GO:0000213">
    <property type="term" value="F:tRNA-intron endonuclease activity"/>
    <property type="evidence" value="ECO:0007669"/>
    <property type="project" value="UniProtKB-EC"/>
</dbReference>
<dbReference type="GO" id="GO:0006397">
    <property type="term" value="P:mRNA processing"/>
    <property type="evidence" value="ECO:0007669"/>
    <property type="project" value="UniProtKB-KW"/>
</dbReference>
<dbReference type="GO" id="GO:0006388">
    <property type="term" value="P:tRNA splicing, via endonucleolytic cleavage and ligation"/>
    <property type="evidence" value="ECO:0007669"/>
    <property type="project" value="Ensembl"/>
</dbReference>
<dbReference type="CDD" id="cd22363">
    <property type="entry name" value="tRNA-intron_lyase_C"/>
    <property type="match status" value="1"/>
</dbReference>
<dbReference type="FunFam" id="3.40.1350.10:FF:000001">
    <property type="entry name" value="tRNA-splicing endonuclease subunit Sen2"/>
    <property type="match status" value="1"/>
</dbReference>
<dbReference type="Gene3D" id="3.40.1350.10">
    <property type="match status" value="1"/>
</dbReference>
<dbReference type="InterPro" id="IPR011856">
    <property type="entry name" value="tRNA_endonuc-like_dom_sf"/>
</dbReference>
<dbReference type="InterPro" id="IPR036167">
    <property type="entry name" value="tRNA_intron_Endo_cat-like_sf"/>
</dbReference>
<dbReference type="InterPro" id="IPR006677">
    <property type="entry name" value="tRNA_intron_Endonuc_cat-like"/>
</dbReference>
<dbReference type="InterPro" id="IPR006678">
    <property type="entry name" value="tRNA_intron_Endonuc_N"/>
</dbReference>
<dbReference type="InterPro" id="IPR006676">
    <property type="entry name" value="tRNA_splic"/>
</dbReference>
<dbReference type="InterPro" id="IPR016589">
    <property type="entry name" value="tRNA_splic_SEN2"/>
</dbReference>
<dbReference type="PANTHER" id="PTHR21227">
    <property type="entry name" value="TRNA-SPLICING ENDONUCLEASE SUBUNIT SEN2"/>
    <property type="match status" value="1"/>
</dbReference>
<dbReference type="PANTHER" id="PTHR21227:SF0">
    <property type="entry name" value="TRNA-SPLICING ENDONUCLEASE SUBUNIT SEN2"/>
    <property type="match status" value="1"/>
</dbReference>
<dbReference type="Pfam" id="PF01974">
    <property type="entry name" value="tRNA_int_endo"/>
    <property type="match status" value="1"/>
</dbReference>
<dbReference type="Pfam" id="PF02778">
    <property type="entry name" value="tRNA_int_endo_N"/>
    <property type="match status" value="1"/>
</dbReference>
<dbReference type="PIRSF" id="PIRSF011789">
    <property type="entry name" value="tRNA_splic_SEN2"/>
    <property type="match status" value="1"/>
</dbReference>
<dbReference type="SUPFAM" id="SSF53032">
    <property type="entry name" value="tRNA-intron endonuclease catalytic domain-like"/>
    <property type="match status" value="1"/>
</dbReference>
<sequence>MAEAVFRAPKRKRRVYESYESPLPIPFGQDQGPRKEFRIFQAEMISNNVVVRGTEDMEQLYGKGYFGKGILSRSRPNFTIANPTLAARWKGVQTDMPIITSEKYQHRVEWARDFLRRQGHDESTVQKILTDYTEPLELPCREEKEETPQHEPLSSKADSSLEGRVEKDELPVTPGGAGQSDDLPGLGTHSDCLQEGPGHATLAAASPSSHNGHVAEDPEVLPQETLVPQGGLWPEASSQAAGEKRAAHEYVLIEEELCGAQEEEAAAASDEKLLKRKKLVCRRNPYRIFEYLQLSLEEAFFLAYALGCLSIYYEKEPLTIVKLWQAFTAVQPTFRTTYMAYHYFRSKGWVPKVGLKYGTDLLLYRKGPPFYHASYSVIIELLDDNYEGSLRRPFSWKSLAALSRVSGNVSKELMLCYLIKPSTMTAEDMETPECMKRIQVQEVILSRWVSSRERSDQDEL</sequence>
<name>SEN2_MOUSE</name>
<comment type="function">
    <text evidence="1">Constitutes one of the two catalytic subunit of the tRNA-splicing endonuclease complex, a complex responsible for identification and cleavage of the splice sites in pre-tRNA. It cleaves pre-tRNA at the 5'- and 3'-splice sites to release the intron. The products are an intron and two tRNA half-molecules bearing 2',3'-cyclic phosphate and 5'-OH termini. There are no conserved sequences at the splice sites, but the intron is invariably located at the same site in the gene, placing the splice sites an invariant distance from the constant structural features of the tRNA body. Probably carries the active site for 5'-splice site cleavage. The tRNA splicing endonuclease is also involved in mRNA processing via its association with pre-mRNA 3'-end processing factors, establishing a link between pre-tRNA splicing and pre-mRNA 3'-end formation, suggesting that the endonuclease subunits function in multiple RNA-processing events (By similarity).</text>
</comment>
<comment type="catalytic activity">
    <reaction>
        <text>pretRNA = a 3'-half-tRNA molecule with a 5'-OH end + a 5'-half-tRNA molecule with a 2',3'-cyclic phosphate end + an intron with a 2',3'-cyclic phosphate and a 5'-hydroxyl terminus.</text>
        <dbReference type="EC" id="4.6.1.16"/>
    </reaction>
</comment>
<comment type="subunit">
    <text evidence="1">tRNA splicing endonuclease is a heterotetramer composed of TSEN2, TSEN15, TSEN34/LENG5 and TSEN54. tRNA splicing endonuclease complex also contains proteins of the pre-mRNA 3'-end processing machinery such as CLP1, CPSF1, CPSF4 and CSTF2 (By similarity).</text>
</comment>
<comment type="subcellular location">
    <subcellularLocation>
        <location evidence="1">Nucleus</location>
    </subcellularLocation>
    <subcellularLocation>
        <location evidence="1">Nucleus</location>
        <location evidence="1">Nucleolus</location>
    </subcellularLocation>
    <text evidence="1">May be transiently localized in the nucleolus.</text>
</comment>
<comment type="similarity">
    <text evidence="3">Belongs to the tRNA-intron endonuclease family.</text>
</comment>
<protein>
    <recommendedName>
        <fullName>tRNA-splicing endonuclease subunit Sen2</fullName>
        <ecNumber>4.6.1.16</ecNumber>
    </recommendedName>
    <alternativeName>
        <fullName>tRNA-intron endonuclease Sen2</fullName>
    </alternativeName>
</protein>